<sequence>MDAATLTYDTLRFADTPDFPETAEPVWVLGRKYSALTEKEQLLNDITSRLWFTYRRNFQAIGGTGPTSDTGWGCMLRCGQMIFAQALICRHVGRDWRWDKQKPKGEYLNILTAFLDKKDSYYSIHQIAQMGVGEGKYIGQWYGPNTVAQVLRKLAVFDQWSSIAVHIAMDNTVVVDEIRRLCRAGSGESSDAGALSNGYTGDSDPSCAQWKPLVLLIPLRLGLSEINEAYIETLKHCFMVPQSLGVIGGRPNSAHYFIGYVGDELIYLDPHTTQLSVEPSDCSFIEDESFHCQHPPCRMHVSEIDPSIAVGFFCSSQEDFEDWCQHIKKLSLSGGALPMFEVVDQLPLHLSNPDVLNLTPDSSDADRLDRFFDSEDEEFEILSL</sequence>
<comment type="function">
    <text evidence="1">Cysteine protease that plays a key role in autophagy by mediating both proteolytic activation and delipidation of ATG8 family proteins. Required for canonical autophagy (macroautophagy), non-canonical autophagy as well as for mitophagy. The protease activity is required for proteolytic activation of ATG8 family proteins: cleaves the C-terminal amino acid of ATG8 proteins to reveal a C-terminal glycine. Exposure of the glycine at the C-terminus is essential for ATG8 proteins conjugation to phosphatidylethanolamine (PE) and insertion to membranes, which is necessary for autophagy. Protease activity is also required to counteract formation of high-molecular weight conjugates of ATG8 proteins (ATG8ylation): acts as a deubiquitinating-like enzyme that removes ATG8 conjugated to other proteins, such as ATG3. In addition to the protease activity, also mediates delipidation of ATG8 family proteins. Catalyzes delipidation of PE-conjugated forms of ATG8 proteins during macroautophagy. Also involved in non-canonical autophagy, a parallel pathway involving conjugation of ATG8 proteins to single membranes at endolysosomal compartments, by catalyzing delipidation of ATG8 proteins conjugated to phosphatidylserine (PS).</text>
</comment>
<comment type="catalytic activity">
    <reaction evidence="1">
        <text>[protein]-C-terminal L-amino acid-glycyl-phosphatidylethanolamide + H2O = [protein]-C-terminal L-amino acid-glycine + a 1,2-diacyl-sn-glycero-3-phosphoethanolamine</text>
        <dbReference type="Rhea" id="RHEA:67548"/>
        <dbReference type="Rhea" id="RHEA-COMP:17323"/>
        <dbReference type="Rhea" id="RHEA-COMP:17324"/>
        <dbReference type="ChEBI" id="CHEBI:15377"/>
        <dbReference type="ChEBI" id="CHEBI:64612"/>
        <dbReference type="ChEBI" id="CHEBI:172940"/>
        <dbReference type="ChEBI" id="CHEBI:172941"/>
    </reaction>
    <physiologicalReaction direction="left-to-right" evidence="1">
        <dbReference type="Rhea" id="RHEA:67549"/>
    </physiologicalReaction>
</comment>
<comment type="catalytic activity">
    <reaction evidence="1">
        <text>[protein]-C-terminal L-amino acid-glycyl-phosphatidylserine + H2O = [protein]-C-terminal L-amino acid-glycine + a 1,2-diacyl-sn-glycero-3-phospho-L-serine</text>
        <dbReference type="Rhea" id="RHEA:67576"/>
        <dbReference type="Rhea" id="RHEA-COMP:17324"/>
        <dbReference type="Rhea" id="RHEA-COMP:17326"/>
        <dbReference type="ChEBI" id="CHEBI:15377"/>
        <dbReference type="ChEBI" id="CHEBI:57262"/>
        <dbReference type="ChEBI" id="CHEBI:172940"/>
        <dbReference type="ChEBI" id="CHEBI:172942"/>
    </reaction>
    <physiologicalReaction direction="left-to-right" evidence="1">
        <dbReference type="Rhea" id="RHEA:67577"/>
    </physiologicalReaction>
</comment>
<comment type="subcellular location">
    <subcellularLocation>
        <location evidence="1">Cytoplasm</location>
    </subcellularLocation>
    <subcellularLocation>
        <location evidence="1">Cytoplasm</location>
        <location evidence="1">Cytosol</location>
    </subcellularLocation>
    <subcellularLocation>
        <location evidence="1">Cytoplasmic vesicle</location>
        <location evidence="1">Autophagosome</location>
    </subcellularLocation>
    <subcellularLocation>
        <location evidence="1">Endoplasmic reticulum</location>
    </subcellularLocation>
    <subcellularLocation>
        <location evidence="1">Mitochondrion</location>
    </subcellularLocation>
    <text evidence="1">Mainly localizes to the cytoplasm, including cytosol.</text>
</comment>
<comment type="domain">
    <text evidence="1">The LIR motif (LC3-interacting region) is required for the interaction with ATG8 family proteins. Required for proteolytic activation and delipidation of ATG8 proteins.</text>
</comment>
<comment type="similarity">
    <text evidence="2">Belongs to the peptidase C54 family.</text>
</comment>
<organism>
    <name type="scientific">Xenopus laevis</name>
    <name type="common">African clawed frog</name>
    <dbReference type="NCBI Taxonomy" id="8355"/>
    <lineage>
        <taxon>Eukaryota</taxon>
        <taxon>Metazoa</taxon>
        <taxon>Chordata</taxon>
        <taxon>Craniata</taxon>
        <taxon>Vertebrata</taxon>
        <taxon>Euteleostomi</taxon>
        <taxon>Amphibia</taxon>
        <taxon>Batrachia</taxon>
        <taxon>Anura</taxon>
        <taxon>Pipoidea</taxon>
        <taxon>Pipidae</taxon>
        <taxon>Xenopodinae</taxon>
        <taxon>Xenopus</taxon>
        <taxon>Xenopus</taxon>
    </lineage>
</organism>
<dbReference type="EC" id="3.4.22.-" evidence="1"/>
<dbReference type="EMBL" id="BC082660">
    <property type="protein sequence ID" value="AAH82660.1"/>
    <property type="molecule type" value="mRNA"/>
</dbReference>
<dbReference type="RefSeq" id="NP_001088025.1">
    <property type="nucleotide sequence ID" value="NM_001094556.1"/>
</dbReference>
<dbReference type="SMR" id="Q640G7"/>
<dbReference type="MEROPS" id="C54.003"/>
<dbReference type="DNASU" id="494717"/>
<dbReference type="GeneID" id="494717"/>
<dbReference type="KEGG" id="xla:494717"/>
<dbReference type="AGR" id="Xenbase:XB-GENE-967116"/>
<dbReference type="CTD" id="494717"/>
<dbReference type="Xenbase" id="XB-GENE-967116">
    <property type="gene designation" value="atg4b.L"/>
</dbReference>
<dbReference type="OrthoDB" id="2960936at2759"/>
<dbReference type="Proteomes" id="UP000186698">
    <property type="component" value="Chromosome 5L"/>
</dbReference>
<dbReference type="Bgee" id="494717">
    <property type="expression patterns" value="Expressed in pancreas and 20 other cell types or tissues"/>
</dbReference>
<dbReference type="GO" id="GO:0005776">
    <property type="term" value="C:autophagosome"/>
    <property type="evidence" value="ECO:0007669"/>
    <property type="project" value="UniProtKB-SubCell"/>
</dbReference>
<dbReference type="GO" id="GO:0005737">
    <property type="term" value="C:cytoplasm"/>
    <property type="evidence" value="ECO:0000318"/>
    <property type="project" value="GO_Central"/>
</dbReference>
<dbReference type="GO" id="GO:0031410">
    <property type="term" value="C:cytoplasmic vesicle"/>
    <property type="evidence" value="ECO:0007669"/>
    <property type="project" value="UniProtKB-KW"/>
</dbReference>
<dbReference type="GO" id="GO:0005829">
    <property type="term" value="C:cytosol"/>
    <property type="evidence" value="ECO:0007669"/>
    <property type="project" value="UniProtKB-SubCell"/>
</dbReference>
<dbReference type="GO" id="GO:0005783">
    <property type="term" value="C:endoplasmic reticulum"/>
    <property type="evidence" value="ECO:0007669"/>
    <property type="project" value="UniProtKB-SubCell"/>
</dbReference>
<dbReference type="GO" id="GO:0005739">
    <property type="term" value="C:mitochondrion"/>
    <property type="evidence" value="ECO:0007669"/>
    <property type="project" value="UniProtKB-SubCell"/>
</dbReference>
<dbReference type="GO" id="GO:0004197">
    <property type="term" value="F:cysteine-type endopeptidase activity"/>
    <property type="evidence" value="ECO:0000318"/>
    <property type="project" value="GO_Central"/>
</dbReference>
<dbReference type="GO" id="GO:0019786">
    <property type="term" value="F:protein-phosphatidylethanolamide deconjugating activity"/>
    <property type="evidence" value="ECO:0000318"/>
    <property type="project" value="GO_Central"/>
</dbReference>
<dbReference type="GO" id="GO:0035973">
    <property type="term" value="P:aggrephagy"/>
    <property type="evidence" value="ECO:0000318"/>
    <property type="project" value="GO_Central"/>
</dbReference>
<dbReference type="GO" id="GO:0000045">
    <property type="term" value="P:autophagosome assembly"/>
    <property type="evidence" value="ECO:0000318"/>
    <property type="project" value="GO_Central"/>
</dbReference>
<dbReference type="GO" id="GO:0006914">
    <property type="term" value="P:autophagy"/>
    <property type="evidence" value="ECO:0000250"/>
    <property type="project" value="UniProtKB"/>
</dbReference>
<dbReference type="GO" id="GO:0016237">
    <property type="term" value="P:microautophagy"/>
    <property type="evidence" value="ECO:0000250"/>
    <property type="project" value="UniProtKB"/>
</dbReference>
<dbReference type="GO" id="GO:0000423">
    <property type="term" value="P:mitophagy"/>
    <property type="evidence" value="ECO:0000250"/>
    <property type="project" value="UniProtKB"/>
</dbReference>
<dbReference type="GO" id="GO:0031173">
    <property type="term" value="P:otolith mineralization completed early in development"/>
    <property type="evidence" value="ECO:0000250"/>
    <property type="project" value="UniProtKB"/>
</dbReference>
<dbReference type="GO" id="GO:0034727">
    <property type="term" value="P:piecemeal microautophagy of the nucleus"/>
    <property type="evidence" value="ECO:0000318"/>
    <property type="project" value="GO_Central"/>
</dbReference>
<dbReference type="GO" id="GO:0016485">
    <property type="term" value="P:protein processing"/>
    <property type="evidence" value="ECO:0000318"/>
    <property type="project" value="GO_Central"/>
</dbReference>
<dbReference type="GO" id="GO:0015031">
    <property type="term" value="P:protein transport"/>
    <property type="evidence" value="ECO:0007669"/>
    <property type="project" value="UniProtKB-KW"/>
</dbReference>
<dbReference type="InterPro" id="IPR046793">
    <property type="entry name" value="ATG4_LIR"/>
</dbReference>
<dbReference type="InterPro" id="IPR038765">
    <property type="entry name" value="Papain-like_cys_pep_sf"/>
</dbReference>
<dbReference type="InterPro" id="IPR005078">
    <property type="entry name" value="Peptidase_C54"/>
</dbReference>
<dbReference type="InterPro" id="IPR046792">
    <property type="entry name" value="Peptidase_C54_cat"/>
</dbReference>
<dbReference type="PANTHER" id="PTHR22624">
    <property type="entry name" value="CYSTEINE PROTEASE ATG4"/>
    <property type="match status" value="1"/>
</dbReference>
<dbReference type="PANTHER" id="PTHR22624:SF39">
    <property type="entry name" value="CYSTEINE PROTEASE ATG4B"/>
    <property type="match status" value="1"/>
</dbReference>
<dbReference type="Pfam" id="PF20166">
    <property type="entry name" value="ATG4_LIR"/>
    <property type="match status" value="1"/>
</dbReference>
<dbReference type="Pfam" id="PF03416">
    <property type="entry name" value="Peptidase_C54"/>
    <property type="match status" value="1"/>
</dbReference>
<dbReference type="SUPFAM" id="SSF54001">
    <property type="entry name" value="Cysteine proteinases"/>
    <property type="match status" value="1"/>
</dbReference>
<name>ATG4B_XENLA</name>
<evidence type="ECO:0000250" key="1">
    <source>
        <dbReference type="UniProtKB" id="Q9Y4P1"/>
    </source>
</evidence>
<evidence type="ECO:0000305" key="2"/>
<reference key="1">
    <citation type="submission" date="2004-09" db="EMBL/GenBank/DDBJ databases">
        <authorList>
            <consortium name="NIH - Xenopus Gene Collection (XGC) project"/>
        </authorList>
    </citation>
    <scope>NUCLEOTIDE SEQUENCE [LARGE SCALE MRNA]</scope>
</reference>
<feature type="chain" id="PRO_0000215848" description="Cysteine protease ATG4B">
    <location>
        <begin position="1"/>
        <end position="384"/>
    </location>
</feature>
<feature type="short sequence motif" description="LIR" evidence="1">
    <location>
        <begin position="379"/>
        <end position="382"/>
    </location>
</feature>
<feature type="active site" description="Nucleophile" evidence="1">
    <location>
        <position position="74"/>
    </location>
</feature>
<feature type="active site" evidence="1">
    <location>
        <position position="269"/>
    </location>
</feature>
<feature type="active site" evidence="1">
    <location>
        <position position="271"/>
    </location>
</feature>
<accession>Q640G7</accession>
<keyword id="KW-0072">Autophagy</keyword>
<keyword id="KW-0963">Cytoplasm</keyword>
<keyword id="KW-0968">Cytoplasmic vesicle</keyword>
<keyword id="KW-0256">Endoplasmic reticulum</keyword>
<keyword id="KW-0378">Hydrolase</keyword>
<keyword id="KW-0496">Mitochondrion</keyword>
<keyword id="KW-0645">Protease</keyword>
<keyword id="KW-0653">Protein transport</keyword>
<keyword id="KW-1185">Reference proteome</keyword>
<keyword id="KW-0788">Thiol protease</keyword>
<keyword id="KW-0813">Transport</keyword>
<keyword id="KW-0833">Ubl conjugation pathway</keyword>
<proteinExistence type="evidence at transcript level"/>
<protein>
    <recommendedName>
        <fullName evidence="2">Cysteine protease ATG4B</fullName>
        <ecNumber evidence="1">3.4.22.-</ecNumber>
    </recommendedName>
    <alternativeName>
        <fullName evidence="1">Autophagy-related protein 4 homolog B</fullName>
    </alternativeName>
</protein>
<gene>
    <name evidence="1" type="primary">atg4b</name>
    <name evidence="1" type="synonym">apg4b</name>
</gene>